<feature type="chain" id="PRO_0000302047" description="Uncharacterized TPR repeat-containing protein At1g05150">
    <location>
        <begin position="1"/>
        <end position="808"/>
    </location>
</feature>
<feature type="domain" description="EF-hand 1" evidence="2">
    <location>
        <begin position="6"/>
        <end position="41"/>
    </location>
</feature>
<feature type="repeat" description="TPR 1">
    <location>
        <begin position="234"/>
        <end position="267"/>
    </location>
</feature>
<feature type="repeat" description="TPR 2">
    <location>
        <begin position="269"/>
        <end position="301"/>
    </location>
</feature>
<feature type="repeat" description="TPR 3">
    <location>
        <begin position="310"/>
        <end position="343"/>
    </location>
</feature>
<feature type="repeat" description="TPR 4">
    <location>
        <begin position="344"/>
        <end position="377"/>
    </location>
</feature>
<feature type="repeat" description="TPR 5">
    <location>
        <begin position="378"/>
        <end position="411"/>
    </location>
</feature>
<feature type="repeat" description="TPR 6">
    <location>
        <begin position="412"/>
        <end position="445"/>
    </location>
</feature>
<feature type="repeat" description="TPR 7">
    <location>
        <begin position="447"/>
        <end position="479"/>
    </location>
</feature>
<feature type="domain" description="EF-hand 2" evidence="2">
    <location>
        <begin position="600"/>
        <end position="635"/>
    </location>
</feature>
<feature type="coiled-coil region" evidence="1">
    <location>
        <begin position="773"/>
        <end position="794"/>
    </location>
</feature>
<feature type="sequence conflict" description="In Ref. 3; BAF01292." evidence="3" ref="3">
    <original>L</original>
    <variation>F</variation>
    <location>
        <position position="526"/>
    </location>
</feature>
<organism>
    <name type="scientific">Arabidopsis thaliana</name>
    <name type="common">Mouse-ear cress</name>
    <dbReference type="NCBI Taxonomy" id="3702"/>
    <lineage>
        <taxon>Eukaryota</taxon>
        <taxon>Viridiplantae</taxon>
        <taxon>Streptophyta</taxon>
        <taxon>Embryophyta</taxon>
        <taxon>Tracheophyta</taxon>
        <taxon>Spermatophyta</taxon>
        <taxon>Magnoliopsida</taxon>
        <taxon>eudicotyledons</taxon>
        <taxon>Gunneridae</taxon>
        <taxon>Pentapetalae</taxon>
        <taxon>rosids</taxon>
        <taxon>malvids</taxon>
        <taxon>Brassicales</taxon>
        <taxon>Brassicaceae</taxon>
        <taxon>Camelineae</taxon>
        <taxon>Arabidopsis</taxon>
    </lineage>
</organism>
<accession>O23052</accession>
<accession>Q0WNK7</accession>
<dbReference type="EMBL" id="AC000098">
    <property type="protein sequence ID" value="AAB71463.1"/>
    <property type="molecule type" value="Genomic_DNA"/>
</dbReference>
<dbReference type="EMBL" id="CP002684">
    <property type="protein sequence ID" value="AEE27795.1"/>
    <property type="molecule type" value="Genomic_DNA"/>
</dbReference>
<dbReference type="EMBL" id="AK229432">
    <property type="protein sequence ID" value="BAF01292.1"/>
    <property type="molecule type" value="mRNA"/>
</dbReference>
<dbReference type="PIR" id="G86185">
    <property type="entry name" value="G86185"/>
</dbReference>
<dbReference type="RefSeq" id="NP_172007.1">
    <property type="nucleotide sequence ID" value="NM_100393.3"/>
</dbReference>
<dbReference type="SMR" id="O23052"/>
<dbReference type="BioGRID" id="24547">
    <property type="interactions" value="2"/>
</dbReference>
<dbReference type="FunCoup" id="O23052">
    <property type="interactions" value="2378"/>
</dbReference>
<dbReference type="STRING" id="3702.O23052"/>
<dbReference type="GlyGen" id="O23052">
    <property type="glycosylation" value="1 site"/>
</dbReference>
<dbReference type="iPTMnet" id="O23052"/>
<dbReference type="SwissPalm" id="O23052"/>
<dbReference type="PaxDb" id="3702-AT1G05150.1"/>
<dbReference type="ProteomicsDB" id="242440"/>
<dbReference type="EnsemblPlants" id="AT1G05150.1">
    <property type="protein sequence ID" value="AT1G05150.1"/>
    <property type="gene ID" value="AT1G05150"/>
</dbReference>
<dbReference type="GeneID" id="839312"/>
<dbReference type="Gramene" id="AT1G05150.1">
    <property type="protein sequence ID" value="AT1G05150.1"/>
    <property type="gene ID" value="AT1G05150"/>
</dbReference>
<dbReference type="KEGG" id="ath:AT1G05150"/>
<dbReference type="Araport" id="AT1G05150"/>
<dbReference type="TAIR" id="AT1G05150"/>
<dbReference type="eggNOG" id="KOG1124">
    <property type="taxonomic scope" value="Eukaryota"/>
</dbReference>
<dbReference type="HOGENOM" id="CLU_019072_0_0_1"/>
<dbReference type="InParanoid" id="O23052"/>
<dbReference type="OMA" id="SEKRVFW"/>
<dbReference type="PhylomeDB" id="O23052"/>
<dbReference type="PRO" id="PR:O23052"/>
<dbReference type="Proteomes" id="UP000006548">
    <property type="component" value="Chromosome 1"/>
</dbReference>
<dbReference type="ExpressionAtlas" id="O23052">
    <property type="expression patterns" value="baseline and differential"/>
</dbReference>
<dbReference type="GO" id="GO:0005768">
    <property type="term" value="C:endosome"/>
    <property type="evidence" value="ECO:0007005"/>
    <property type="project" value="TAIR"/>
</dbReference>
<dbReference type="GO" id="GO:0005576">
    <property type="term" value="C:extracellular region"/>
    <property type="evidence" value="ECO:0007005"/>
    <property type="project" value="TAIR"/>
</dbReference>
<dbReference type="GO" id="GO:0005794">
    <property type="term" value="C:Golgi apparatus"/>
    <property type="evidence" value="ECO:0007005"/>
    <property type="project" value="TAIR"/>
</dbReference>
<dbReference type="GO" id="GO:0005886">
    <property type="term" value="C:plasma membrane"/>
    <property type="evidence" value="ECO:0007005"/>
    <property type="project" value="TAIR"/>
</dbReference>
<dbReference type="GO" id="GO:0009506">
    <property type="term" value="C:plasmodesma"/>
    <property type="evidence" value="ECO:0007005"/>
    <property type="project" value="TAIR"/>
</dbReference>
<dbReference type="GO" id="GO:0005802">
    <property type="term" value="C:trans-Golgi network"/>
    <property type="evidence" value="ECO:0007005"/>
    <property type="project" value="TAIR"/>
</dbReference>
<dbReference type="GO" id="GO:0005509">
    <property type="term" value="F:calcium ion binding"/>
    <property type="evidence" value="ECO:0007669"/>
    <property type="project" value="InterPro"/>
</dbReference>
<dbReference type="FunFam" id="1.25.40.10:FF:000195">
    <property type="entry name" value="Putative TPR repeat-containing protein"/>
    <property type="match status" value="1"/>
</dbReference>
<dbReference type="FunFam" id="1.10.238.10:FF:000173">
    <property type="entry name" value="uncharacterized TPR repeat-containing protein At1g05150-like"/>
    <property type="match status" value="1"/>
</dbReference>
<dbReference type="FunFam" id="1.25.40.10:FF:000287">
    <property type="entry name" value="uncharacterized TPR repeat-containing protein At1g05150-like"/>
    <property type="match status" value="1"/>
</dbReference>
<dbReference type="Gene3D" id="1.10.238.10">
    <property type="entry name" value="EF-hand"/>
    <property type="match status" value="2"/>
</dbReference>
<dbReference type="Gene3D" id="1.25.40.10">
    <property type="entry name" value="Tetratricopeptide repeat domain"/>
    <property type="match status" value="2"/>
</dbReference>
<dbReference type="InterPro" id="IPR011992">
    <property type="entry name" value="EF-hand-dom_pair"/>
</dbReference>
<dbReference type="InterPro" id="IPR002048">
    <property type="entry name" value="EF_hand_dom"/>
</dbReference>
<dbReference type="InterPro" id="IPR011990">
    <property type="entry name" value="TPR-like_helical_dom_sf"/>
</dbReference>
<dbReference type="InterPro" id="IPR019734">
    <property type="entry name" value="TPR_rpt"/>
</dbReference>
<dbReference type="PANTHER" id="PTHR45081">
    <property type="entry name" value="EF HAND FAMILY PROTEIN, PUTATIVE, EXPRESSED-RELATED"/>
    <property type="match status" value="1"/>
</dbReference>
<dbReference type="PANTHER" id="PTHR45081:SF1">
    <property type="entry name" value="EF HAND FAMILY PROTEIN, PUTATIVE, EXPRESSED-RELATED"/>
    <property type="match status" value="1"/>
</dbReference>
<dbReference type="Pfam" id="PF13432">
    <property type="entry name" value="TPR_16"/>
    <property type="match status" value="2"/>
</dbReference>
<dbReference type="SMART" id="SM00028">
    <property type="entry name" value="TPR"/>
    <property type="match status" value="7"/>
</dbReference>
<dbReference type="SUPFAM" id="SSF47473">
    <property type="entry name" value="EF-hand"/>
    <property type="match status" value="1"/>
</dbReference>
<dbReference type="SUPFAM" id="SSF48452">
    <property type="entry name" value="TPR-like"/>
    <property type="match status" value="1"/>
</dbReference>
<dbReference type="PROSITE" id="PS50222">
    <property type="entry name" value="EF_HAND_2"/>
    <property type="match status" value="2"/>
</dbReference>
<dbReference type="PROSITE" id="PS50005">
    <property type="entry name" value="TPR"/>
    <property type="match status" value="6"/>
</dbReference>
<dbReference type="PROSITE" id="PS50293">
    <property type="entry name" value="TPR_REGION"/>
    <property type="match status" value="1"/>
</dbReference>
<name>Y1515_ARATH</name>
<protein>
    <recommendedName>
        <fullName>Uncharacterized TPR repeat-containing protein At1g05150</fullName>
    </recommendedName>
</protein>
<gene>
    <name type="ordered locus">At1g05150</name>
    <name type="ORF">YUP8H12.24</name>
</gene>
<sequence length="808" mass="90169">MATRGSRSEKVKRIFQQFDGNHDGGLNREEMAALVVAVNPRVKFSDEQINAILDEVFRTYAEFIDPNKGLTYDGLLRTYDDGAGDVDRDFDALGLELNADETTIKGSEAASSSSITDERAVEAQKKQRTAAWAVSPNHGIVFDETWKLVDDLEILVKRLKSKQEKDGKLKADNNNNNVDAFSDAGWSRELGPSSEISEKRIYWEESSHDYGVFVKELGVLRSKADGARSREEAFDGHMAIGRVLYEHQLFKEALVSFKRACELQPTDVRPHFKAGNCLYVLGKCKESKDEFLLALEAAESGGNQWAYLLPQIYVNLGIALEGEGMVLSACEYYREAAILCPTHFRALKLLGSALFGVGEYRAAVKALEEAIYLKPDYADAHCDLASSLHSMGEDERAIEVFQRAIDLKPGHVDALYNLGGLYMDLGRFQRASEMYTRVLTVWPNHWRAQLNKAVSLLGAGETEEAKRALKEALKLTNRVELHDAISHLKHLQKKKGKNNGNGNGGEGPFIVVEPSKFKTVGEKTTLRPDLATALQIRAFQRVTRLGKCDVEAVRKEMRDNDVPVSYSGSGGPTKSIRKPNLEEILRRLLSSLKPDTFQGAIKAINEKILALLDDSGSGRVDMGMFYAVIAPLCGGHSDKRKRVAFDALLWRPVNEGSSQITKTDAVKYIKLLRAIYIPSHGMSEMLEVHGEEEAESSVTVTFNQFLAMFDDPDWGFGIMSTILKLEANDRNRHGNQVCSVCRYPVIGSRFKEVKARFSLCNQCYGEGKVPPSFKQEEYKFREYESEAEAMKAKCVCFSMQSHKKAIAT</sequence>
<evidence type="ECO:0000255" key="1"/>
<evidence type="ECO:0000255" key="2">
    <source>
        <dbReference type="PROSITE-ProRule" id="PRU00448"/>
    </source>
</evidence>
<evidence type="ECO:0000305" key="3"/>
<reference key="1">
    <citation type="journal article" date="2000" name="Nature">
        <title>Sequence and analysis of chromosome 1 of the plant Arabidopsis thaliana.</title>
        <authorList>
            <person name="Theologis A."/>
            <person name="Ecker J.R."/>
            <person name="Palm C.J."/>
            <person name="Federspiel N.A."/>
            <person name="Kaul S."/>
            <person name="White O."/>
            <person name="Alonso J."/>
            <person name="Altafi H."/>
            <person name="Araujo R."/>
            <person name="Bowman C.L."/>
            <person name="Brooks S.Y."/>
            <person name="Buehler E."/>
            <person name="Chan A."/>
            <person name="Chao Q."/>
            <person name="Chen H."/>
            <person name="Cheuk R.F."/>
            <person name="Chin C.W."/>
            <person name="Chung M.K."/>
            <person name="Conn L."/>
            <person name="Conway A.B."/>
            <person name="Conway A.R."/>
            <person name="Creasy T.H."/>
            <person name="Dewar K."/>
            <person name="Dunn P."/>
            <person name="Etgu P."/>
            <person name="Feldblyum T.V."/>
            <person name="Feng J.-D."/>
            <person name="Fong B."/>
            <person name="Fujii C.Y."/>
            <person name="Gill J.E."/>
            <person name="Goldsmith A.D."/>
            <person name="Haas B."/>
            <person name="Hansen N.F."/>
            <person name="Hughes B."/>
            <person name="Huizar L."/>
            <person name="Hunter J.L."/>
            <person name="Jenkins J."/>
            <person name="Johnson-Hopson C."/>
            <person name="Khan S."/>
            <person name="Khaykin E."/>
            <person name="Kim C.J."/>
            <person name="Koo H.L."/>
            <person name="Kremenetskaia I."/>
            <person name="Kurtz D.B."/>
            <person name="Kwan A."/>
            <person name="Lam B."/>
            <person name="Langin-Hooper S."/>
            <person name="Lee A."/>
            <person name="Lee J.M."/>
            <person name="Lenz C.A."/>
            <person name="Li J.H."/>
            <person name="Li Y.-P."/>
            <person name="Lin X."/>
            <person name="Liu S.X."/>
            <person name="Liu Z.A."/>
            <person name="Luros J.S."/>
            <person name="Maiti R."/>
            <person name="Marziali A."/>
            <person name="Militscher J."/>
            <person name="Miranda M."/>
            <person name="Nguyen M."/>
            <person name="Nierman W.C."/>
            <person name="Osborne B.I."/>
            <person name="Pai G."/>
            <person name="Peterson J."/>
            <person name="Pham P.K."/>
            <person name="Rizzo M."/>
            <person name="Rooney T."/>
            <person name="Rowley D."/>
            <person name="Sakano H."/>
            <person name="Salzberg S.L."/>
            <person name="Schwartz J.R."/>
            <person name="Shinn P."/>
            <person name="Southwick A.M."/>
            <person name="Sun H."/>
            <person name="Tallon L.J."/>
            <person name="Tambunga G."/>
            <person name="Toriumi M.J."/>
            <person name="Town C.D."/>
            <person name="Utterback T."/>
            <person name="Van Aken S."/>
            <person name="Vaysberg M."/>
            <person name="Vysotskaia V.S."/>
            <person name="Walker M."/>
            <person name="Wu D."/>
            <person name="Yu G."/>
            <person name="Fraser C.M."/>
            <person name="Venter J.C."/>
            <person name="Davis R.W."/>
        </authorList>
    </citation>
    <scope>NUCLEOTIDE SEQUENCE [LARGE SCALE GENOMIC DNA]</scope>
    <source>
        <strain>cv. Columbia</strain>
    </source>
</reference>
<reference key="2">
    <citation type="journal article" date="2017" name="Plant J.">
        <title>Araport11: a complete reannotation of the Arabidopsis thaliana reference genome.</title>
        <authorList>
            <person name="Cheng C.Y."/>
            <person name="Krishnakumar V."/>
            <person name="Chan A.P."/>
            <person name="Thibaud-Nissen F."/>
            <person name="Schobel S."/>
            <person name="Town C.D."/>
        </authorList>
    </citation>
    <scope>GENOME REANNOTATION</scope>
    <source>
        <strain>cv. Columbia</strain>
    </source>
</reference>
<reference key="3">
    <citation type="submission" date="2006-07" db="EMBL/GenBank/DDBJ databases">
        <title>Large-scale analysis of RIKEN Arabidopsis full-length (RAFL) cDNAs.</title>
        <authorList>
            <person name="Totoki Y."/>
            <person name="Seki M."/>
            <person name="Ishida J."/>
            <person name="Nakajima M."/>
            <person name="Enju A."/>
            <person name="Kamiya A."/>
            <person name="Narusaka M."/>
            <person name="Shin-i T."/>
            <person name="Nakagawa M."/>
            <person name="Sakamoto N."/>
            <person name="Oishi K."/>
            <person name="Kohara Y."/>
            <person name="Kobayashi M."/>
            <person name="Toyoda A."/>
            <person name="Sakaki Y."/>
            <person name="Sakurai T."/>
            <person name="Iida K."/>
            <person name="Akiyama K."/>
            <person name="Satou M."/>
            <person name="Toyoda T."/>
            <person name="Konagaya A."/>
            <person name="Carninci P."/>
            <person name="Kawai J."/>
            <person name="Hayashizaki Y."/>
            <person name="Shinozaki K."/>
        </authorList>
    </citation>
    <scope>NUCLEOTIDE SEQUENCE [LARGE SCALE MRNA]</scope>
    <source>
        <strain>cv. Columbia</strain>
    </source>
</reference>
<reference key="4">
    <citation type="journal article" date="2009" name="J. Proteomics">
        <title>Phosphoproteomic analysis of nuclei-enriched fractions from Arabidopsis thaliana.</title>
        <authorList>
            <person name="Jones A.M.E."/>
            <person name="MacLean D."/>
            <person name="Studholme D.J."/>
            <person name="Serna-Sanz A."/>
            <person name="Andreasson E."/>
            <person name="Rathjen J.P."/>
            <person name="Peck S.C."/>
        </authorList>
    </citation>
    <scope>IDENTIFICATION BY MASS SPECTROMETRY [LARGE SCALE ANALYSIS]</scope>
    <source>
        <strain>cv. Columbia</strain>
    </source>
</reference>
<reference key="5">
    <citation type="journal article" date="2009" name="Plant Physiol.">
        <title>Large-scale Arabidopsis phosphoproteome profiling reveals novel chloroplast kinase substrates and phosphorylation networks.</title>
        <authorList>
            <person name="Reiland S."/>
            <person name="Messerli G."/>
            <person name="Baerenfaller K."/>
            <person name="Gerrits B."/>
            <person name="Endler A."/>
            <person name="Grossmann J."/>
            <person name="Gruissem W."/>
            <person name="Baginsky S."/>
        </authorList>
    </citation>
    <scope>IDENTIFICATION BY MASS SPECTROMETRY [LARGE SCALE ANALYSIS]</scope>
</reference>
<proteinExistence type="evidence at protein level"/>
<keyword id="KW-0175">Coiled coil</keyword>
<keyword id="KW-0479">Metal-binding</keyword>
<keyword id="KW-1185">Reference proteome</keyword>
<keyword id="KW-0677">Repeat</keyword>
<keyword id="KW-0802">TPR repeat</keyword>